<keyword id="KW-0067">ATP-binding</keyword>
<keyword id="KW-0963">Cytoplasm</keyword>
<keyword id="KW-0418">Kinase</keyword>
<keyword id="KW-0460">Magnesium</keyword>
<keyword id="KW-0479">Metal-binding</keyword>
<keyword id="KW-0546">Nucleotide metabolism</keyword>
<keyword id="KW-0547">Nucleotide-binding</keyword>
<keyword id="KW-0597">Phosphoprotein</keyword>
<keyword id="KW-0808">Transferase</keyword>
<dbReference type="EC" id="2.7.4.6" evidence="1"/>
<dbReference type="EMBL" id="CP001337">
    <property type="protein sequence ID" value="ACL25676.1"/>
    <property type="molecule type" value="Genomic_DNA"/>
</dbReference>
<dbReference type="RefSeq" id="WP_015941532.1">
    <property type="nucleotide sequence ID" value="NC_011831.1"/>
</dbReference>
<dbReference type="SMR" id="B8G5H0"/>
<dbReference type="STRING" id="326427.Cagg_2814"/>
<dbReference type="KEGG" id="cag:Cagg_2814"/>
<dbReference type="eggNOG" id="COG0105">
    <property type="taxonomic scope" value="Bacteria"/>
</dbReference>
<dbReference type="HOGENOM" id="CLU_060216_6_3_0"/>
<dbReference type="OrthoDB" id="9801161at2"/>
<dbReference type="Proteomes" id="UP000002508">
    <property type="component" value="Chromosome"/>
</dbReference>
<dbReference type="GO" id="GO:0005737">
    <property type="term" value="C:cytoplasm"/>
    <property type="evidence" value="ECO:0007669"/>
    <property type="project" value="UniProtKB-SubCell"/>
</dbReference>
<dbReference type="GO" id="GO:0005524">
    <property type="term" value="F:ATP binding"/>
    <property type="evidence" value="ECO:0007669"/>
    <property type="project" value="UniProtKB-UniRule"/>
</dbReference>
<dbReference type="GO" id="GO:0046872">
    <property type="term" value="F:metal ion binding"/>
    <property type="evidence" value="ECO:0007669"/>
    <property type="project" value="UniProtKB-KW"/>
</dbReference>
<dbReference type="GO" id="GO:0004550">
    <property type="term" value="F:nucleoside diphosphate kinase activity"/>
    <property type="evidence" value="ECO:0007669"/>
    <property type="project" value="UniProtKB-UniRule"/>
</dbReference>
<dbReference type="GO" id="GO:0006241">
    <property type="term" value="P:CTP biosynthetic process"/>
    <property type="evidence" value="ECO:0007669"/>
    <property type="project" value="UniProtKB-UniRule"/>
</dbReference>
<dbReference type="GO" id="GO:0006183">
    <property type="term" value="P:GTP biosynthetic process"/>
    <property type="evidence" value="ECO:0007669"/>
    <property type="project" value="UniProtKB-UniRule"/>
</dbReference>
<dbReference type="GO" id="GO:0006228">
    <property type="term" value="P:UTP biosynthetic process"/>
    <property type="evidence" value="ECO:0007669"/>
    <property type="project" value="UniProtKB-UniRule"/>
</dbReference>
<dbReference type="CDD" id="cd04413">
    <property type="entry name" value="NDPk_I"/>
    <property type="match status" value="1"/>
</dbReference>
<dbReference type="FunFam" id="3.30.70.141:FF:000003">
    <property type="entry name" value="Nucleoside diphosphate kinase"/>
    <property type="match status" value="1"/>
</dbReference>
<dbReference type="Gene3D" id="3.30.70.141">
    <property type="entry name" value="Nucleoside diphosphate kinase-like domain"/>
    <property type="match status" value="1"/>
</dbReference>
<dbReference type="HAMAP" id="MF_00451">
    <property type="entry name" value="NDP_kinase"/>
    <property type="match status" value="1"/>
</dbReference>
<dbReference type="InterPro" id="IPR034907">
    <property type="entry name" value="NDK-like_dom"/>
</dbReference>
<dbReference type="InterPro" id="IPR036850">
    <property type="entry name" value="NDK-like_dom_sf"/>
</dbReference>
<dbReference type="InterPro" id="IPR001564">
    <property type="entry name" value="Nucleoside_diP_kinase"/>
</dbReference>
<dbReference type="InterPro" id="IPR023005">
    <property type="entry name" value="Nucleoside_diP_kinase_AS"/>
</dbReference>
<dbReference type="NCBIfam" id="NF001908">
    <property type="entry name" value="PRK00668.1"/>
    <property type="match status" value="1"/>
</dbReference>
<dbReference type="PANTHER" id="PTHR11349">
    <property type="entry name" value="NUCLEOSIDE DIPHOSPHATE KINASE"/>
    <property type="match status" value="1"/>
</dbReference>
<dbReference type="Pfam" id="PF00334">
    <property type="entry name" value="NDK"/>
    <property type="match status" value="1"/>
</dbReference>
<dbReference type="PRINTS" id="PR01243">
    <property type="entry name" value="NUCDPKINASE"/>
</dbReference>
<dbReference type="SMART" id="SM00562">
    <property type="entry name" value="NDK"/>
    <property type="match status" value="1"/>
</dbReference>
<dbReference type="SUPFAM" id="SSF54919">
    <property type="entry name" value="Nucleoside diphosphate kinase, NDK"/>
    <property type="match status" value="1"/>
</dbReference>
<dbReference type="PROSITE" id="PS00469">
    <property type="entry name" value="NDPK"/>
    <property type="match status" value="1"/>
</dbReference>
<dbReference type="PROSITE" id="PS51374">
    <property type="entry name" value="NDPK_LIKE"/>
    <property type="match status" value="1"/>
</dbReference>
<feature type="chain" id="PRO_1000135245" description="Nucleoside diphosphate kinase">
    <location>
        <begin position="1"/>
        <end position="151"/>
    </location>
</feature>
<feature type="active site" description="Pros-phosphohistidine intermediate" evidence="1">
    <location>
        <position position="116"/>
    </location>
</feature>
<feature type="binding site" evidence="1">
    <location>
        <position position="9"/>
    </location>
    <ligand>
        <name>ATP</name>
        <dbReference type="ChEBI" id="CHEBI:30616"/>
    </ligand>
</feature>
<feature type="binding site" evidence="1">
    <location>
        <position position="57"/>
    </location>
    <ligand>
        <name>ATP</name>
        <dbReference type="ChEBI" id="CHEBI:30616"/>
    </ligand>
</feature>
<feature type="binding site" evidence="1">
    <location>
        <position position="86"/>
    </location>
    <ligand>
        <name>ATP</name>
        <dbReference type="ChEBI" id="CHEBI:30616"/>
    </ligand>
</feature>
<feature type="binding site" evidence="1">
    <location>
        <position position="92"/>
    </location>
    <ligand>
        <name>ATP</name>
        <dbReference type="ChEBI" id="CHEBI:30616"/>
    </ligand>
</feature>
<feature type="binding site" evidence="1">
    <location>
        <position position="103"/>
    </location>
    <ligand>
        <name>ATP</name>
        <dbReference type="ChEBI" id="CHEBI:30616"/>
    </ligand>
</feature>
<feature type="binding site" evidence="1">
    <location>
        <position position="113"/>
    </location>
    <ligand>
        <name>ATP</name>
        <dbReference type="ChEBI" id="CHEBI:30616"/>
    </ligand>
</feature>
<reference key="1">
    <citation type="submission" date="2008-12" db="EMBL/GenBank/DDBJ databases">
        <title>Complete sequence of Chloroflexus aggregans DSM 9485.</title>
        <authorList>
            <consortium name="US DOE Joint Genome Institute"/>
            <person name="Lucas S."/>
            <person name="Copeland A."/>
            <person name="Lapidus A."/>
            <person name="Glavina del Rio T."/>
            <person name="Dalin E."/>
            <person name="Tice H."/>
            <person name="Pitluck S."/>
            <person name="Foster B."/>
            <person name="Larimer F."/>
            <person name="Land M."/>
            <person name="Hauser L."/>
            <person name="Kyrpides N."/>
            <person name="Mikhailova N."/>
            <person name="Bryant D.A."/>
            <person name="Richardson P."/>
        </authorList>
    </citation>
    <scope>NUCLEOTIDE SEQUENCE [LARGE SCALE GENOMIC DNA]</scope>
    <source>
        <strain>MD-66 / DSM 9485</strain>
    </source>
</reference>
<organism>
    <name type="scientific">Chloroflexus aggregans (strain MD-66 / DSM 9485)</name>
    <dbReference type="NCBI Taxonomy" id="326427"/>
    <lineage>
        <taxon>Bacteria</taxon>
        <taxon>Bacillati</taxon>
        <taxon>Chloroflexota</taxon>
        <taxon>Chloroflexia</taxon>
        <taxon>Chloroflexales</taxon>
        <taxon>Chloroflexineae</taxon>
        <taxon>Chloroflexaceae</taxon>
        <taxon>Chloroflexus</taxon>
    </lineage>
</organism>
<name>NDK_CHLAD</name>
<sequence length="151" mass="16600">MERALLILKPDAVQRGLIGAIISRFEQRGLKFQGLKLMQVDEALARRHYAEHEGKSFFEGLVKYITSAPVVVAVVAGKPGTVELVRTMVGATNPAKAAPGTIRGDFGVDIGRNLIHASDSPESGERETAIFFQPHELIGDWNRTLDGWIYE</sequence>
<evidence type="ECO:0000255" key="1">
    <source>
        <dbReference type="HAMAP-Rule" id="MF_00451"/>
    </source>
</evidence>
<accession>B8G5H0</accession>
<proteinExistence type="inferred from homology"/>
<gene>
    <name evidence="1" type="primary">ndk</name>
    <name type="ordered locus">Cagg_2814</name>
</gene>
<comment type="function">
    <text evidence="1">Major role in the synthesis of nucleoside triphosphates other than ATP. The ATP gamma phosphate is transferred to the NDP beta phosphate via a ping-pong mechanism, using a phosphorylated active-site intermediate.</text>
</comment>
<comment type="catalytic activity">
    <reaction evidence="1">
        <text>a 2'-deoxyribonucleoside 5'-diphosphate + ATP = a 2'-deoxyribonucleoside 5'-triphosphate + ADP</text>
        <dbReference type="Rhea" id="RHEA:44640"/>
        <dbReference type="ChEBI" id="CHEBI:30616"/>
        <dbReference type="ChEBI" id="CHEBI:61560"/>
        <dbReference type="ChEBI" id="CHEBI:73316"/>
        <dbReference type="ChEBI" id="CHEBI:456216"/>
        <dbReference type="EC" id="2.7.4.6"/>
    </reaction>
</comment>
<comment type="catalytic activity">
    <reaction evidence="1">
        <text>a ribonucleoside 5'-diphosphate + ATP = a ribonucleoside 5'-triphosphate + ADP</text>
        <dbReference type="Rhea" id="RHEA:18113"/>
        <dbReference type="ChEBI" id="CHEBI:30616"/>
        <dbReference type="ChEBI" id="CHEBI:57930"/>
        <dbReference type="ChEBI" id="CHEBI:61557"/>
        <dbReference type="ChEBI" id="CHEBI:456216"/>
        <dbReference type="EC" id="2.7.4.6"/>
    </reaction>
</comment>
<comment type="cofactor">
    <cofactor evidence="1">
        <name>Mg(2+)</name>
        <dbReference type="ChEBI" id="CHEBI:18420"/>
    </cofactor>
</comment>
<comment type="subunit">
    <text evidence="1">Homotetramer.</text>
</comment>
<comment type="subcellular location">
    <subcellularLocation>
        <location evidence="1">Cytoplasm</location>
    </subcellularLocation>
</comment>
<comment type="similarity">
    <text evidence="1">Belongs to the NDK family.</text>
</comment>
<protein>
    <recommendedName>
        <fullName evidence="1">Nucleoside diphosphate kinase</fullName>
        <shortName evidence="1">NDK</shortName>
        <shortName evidence="1">NDP kinase</shortName>
        <ecNumber evidence="1">2.7.4.6</ecNumber>
    </recommendedName>
    <alternativeName>
        <fullName evidence="1">Nucleoside-2-P kinase</fullName>
    </alternativeName>
</protein>